<dbReference type="EMBL" id="CP000802">
    <property type="protein sequence ID" value="ABV06233.1"/>
    <property type="molecule type" value="Genomic_DNA"/>
</dbReference>
<dbReference type="RefSeq" id="WP_000431370.1">
    <property type="nucleotide sequence ID" value="NC_009800.1"/>
</dbReference>
<dbReference type="SMR" id="A8A129"/>
<dbReference type="GeneID" id="93776081"/>
<dbReference type="KEGG" id="ecx:EcHS_A1922"/>
<dbReference type="HOGENOM" id="CLU_113254_0_0_6"/>
<dbReference type="GO" id="GO:0005829">
    <property type="term" value="C:cytosol"/>
    <property type="evidence" value="ECO:0007669"/>
    <property type="project" value="TreeGrafter"/>
</dbReference>
<dbReference type="GO" id="GO:0033592">
    <property type="term" value="F:RNA strand annealing activity"/>
    <property type="evidence" value="ECO:0007669"/>
    <property type="project" value="UniProtKB-UniRule"/>
</dbReference>
<dbReference type="GO" id="GO:0034057">
    <property type="term" value="F:RNA strand-exchange activity"/>
    <property type="evidence" value="ECO:0007669"/>
    <property type="project" value="UniProtKB-UniRule"/>
</dbReference>
<dbReference type="GO" id="GO:0010608">
    <property type="term" value="P:post-transcriptional regulation of gene expression"/>
    <property type="evidence" value="ECO:0007669"/>
    <property type="project" value="InterPro"/>
</dbReference>
<dbReference type="FunFam" id="1.10.1710.10:FF:000001">
    <property type="entry name" value="RNA chaperone ProQ"/>
    <property type="match status" value="1"/>
</dbReference>
<dbReference type="Gene3D" id="1.10.1710.10">
    <property type="entry name" value="ProQ/FinO domain"/>
    <property type="match status" value="1"/>
</dbReference>
<dbReference type="HAMAP" id="MF_00749">
    <property type="entry name" value="ProQ"/>
    <property type="match status" value="1"/>
</dbReference>
<dbReference type="InterPro" id="IPR023529">
    <property type="entry name" value="ProQ"/>
</dbReference>
<dbReference type="InterPro" id="IPR016103">
    <property type="entry name" value="ProQ/FinO"/>
</dbReference>
<dbReference type="InterPro" id="IPR036442">
    <property type="entry name" value="ProQ/FinO_sf"/>
</dbReference>
<dbReference type="InterPro" id="IPR035236">
    <property type="entry name" value="ProQ_C"/>
</dbReference>
<dbReference type="NCBIfam" id="NF003434">
    <property type="entry name" value="PRK04950.1"/>
    <property type="match status" value="1"/>
</dbReference>
<dbReference type="PANTHER" id="PTHR38106">
    <property type="entry name" value="RNA CHAPERONE PROQ"/>
    <property type="match status" value="1"/>
</dbReference>
<dbReference type="PANTHER" id="PTHR38106:SF1">
    <property type="entry name" value="RNA CHAPERONE PROQ"/>
    <property type="match status" value="1"/>
</dbReference>
<dbReference type="Pfam" id="PF04352">
    <property type="entry name" value="ProQ"/>
    <property type="match status" value="1"/>
</dbReference>
<dbReference type="Pfam" id="PF17516">
    <property type="entry name" value="ProQ_C"/>
    <property type="match status" value="1"/>
</dbReference>
<dbReference type="SMART" id="SM00945">
    <property type="entry name" value="ProQ"/>
    <property type="match status" value="1"/>
</dbReference>
<dbReference type="SUPFAM" id="SSF48657">
    <property type="entry name" value="FinO-like"/>
    <property type="match status" value="1"/>
</dbReference>
<gene>
    <name evidence="1" type="primary">proQ</name>
    <name type="ordered locus">EcHS_A1922</name>
</gene>
<sequence>MENQPKLNSSKEVIAFLAERFPHCFSAEGEARPLKIGIFQDLVDRVAGEMNLSKTQLRSALRLYTSSWRYLYGVKPGATRVDLDGNPCGELDEQHVEHARKQLEEAKARVQAQRAEQQAKKREAAAAAGEKEDAPRRERKPRPTTPRRKEGAERKPRAQKPVEKAPKTVKAPREEQHTPVSDISALTVGQALKVKAGQNAMDATVLEITKDGVRVQLNSGMSLIVRAEHLVF</sequence>
<comment type="function">
    <text evidence="1">RNA chaperone with significant RNA binding, RNA strand exchange and RNA duplexing activities. May regulate ProP activity through an RNA-based, post-transcriptional mechanism.</text>
</comment>
<comment type="subcellular location">
    <subcellularLocation>
        <location evidence="1">Cytoplasm</location>
    </subcellularLocation>
</comment>
<comment type="similarity">
    <text evidence="1">Belongs to the ProQ family.</text>
</comment>
<name>PROQ_ECOHS</name>
<protein>
    <recommendedName>
        <fullName evidence="1">RNA chaperone ProQ</fullName>
    </recommendedName>
</protein>
<accession>A8A129</accession>
<reference key="1">
    <citation type="journal article" date="2008" name="J. Bacteriol.">
        <title>The pangenome structure of Escherichia coli: comparative genomic analysis of E. coli commensal and pathogenic isolates.</title>
        <authorList>
            <person name="Rasko D.A."/>
            <person name="Rosovitz M.J."/>
            <person name="Myers G.S.A."/>
            <person name="Mongodin E.F."/>
            <person name="Fricke W.F."/>
            <person name="Gajer P."/>
            <person name="Crabtree J."/>
            <person name="Sebaihia M."/>
            <person name="Thomson N.R."/>
            <person name="Chaudhuri R."/>
            <person name="Henderson I.R."/>
            <person name="Sperandio V."/>
            <person name="Ravel J."/>
        </authorList>
    </citation>
    <scope>NUCLEOTIDE SEQUENCE [LARGE SCALE GENOMIC DNA]</scope>
    <source>
        <strain>HS</strain>
    </source>
</reference>
<organism>
    <name type="scientific">Escherichia coli O9:H4 (strain HS)</name>
    <dbReference type="NCBI Taxonomy" id="331112"/>
    <lineage>
        <taxon>Bacteria</taxon>
        <taxon>Pseudomonadati</taxon>
        <taxon>Pseudomonadota</taxon>
        <taxon>Gammaproteobacteria</taxon>
        <taxon>Enterobacterales</taxon>
        <taxon>Enterobacteriaceae</taxon>
        <taxon>Escherichia</taxon>
    </lineage>
</organism>
<keyword id="KW-0143">Chaperone</keyword>
<keyword id="KW-0963">Cytoplasm</keyword>
<keyword id="KW-0694">RNA-binding</keyword>
<proteinExistence type="inferred from homology"/>
<feature type="chain" id="PRO_1000062182" description="RNA chaperone ProQ">
    <location>
        <begin position="1"/>
        <end position="232"/>
    </location>
</feature>
<feature type="region of interest" description="Disordered" evidence="2">
    <location>
        <begin position="105"/>
        <end position="182"/>
    </location>
</feature>
<feature type="compositionally biased region" description="Basic and acidic residues" evidence="2">
    <location>
        <begin position="117"/>
        <end position="136"/>
    </location>
</feature>
<feature type="compositionally biased region" description="Basic residues" evidence="2">
    <location>
        <begin position="137"/>
        <end position="146"/>
    </location>
</feature>
<feature type="compositionally biased region" description="Basic and acidic residues" evidence="2">
    <location>
        <begin position="147"/>
        <end position="177"/>
    </location>
</feature>
<evidence type="ECO:0000255" key="1">
    <source>
        <dbReference type="HAMAP-Rule" id="MF_00749"/>
    </source>
</evidence>
<evidence type="ECO:0000256" key="2">
    <source>
        <dbReference type="SAM" id="MobiDB-lite"/>
    </source>
</evidence>